<organism>
    <name type="scientific">Pan paniscus</name>
    <name type="common">Pygmy chimpanzee</name>
    <name type="synonym">Bonobo</name>
    <dbReference type="NCBI Taxonomy" id="9597"/>
    <lineage>
        <taxon>Eukaryota</taxon>
        <taxon>Metazoa</taxon>
        <taxon>Chordata</taxon>
        <taxon>Craniata</taxon>
        <taxon>Vertebrata</taxon>
        <taxon>Euteleostomi</taxon>
        <taxon>Mammalia</taxon>
        <taxon>Eutheria</taxon>
        <taxon>Euarchontoglires</taxon>
        <taxon>Primates</taxon>
        <taxon>Haplorrhini</taxon>
        <taxon>Catarrhini</taxon>
        <taxon>Hominidae</taxon>
        <taxon>Pan</taxon>
    </lineage>
</organism>
<dbReference type="EC" id="1.2.1.24"/>
<dbReference type="EMBL" id="AJ891037">
    <property type="protein sequence ID" value="CAI69937.1"/>
    <property type="molecule type" value="mRNA"/>
</dbReference>
<dbReference type="RefSeq" id="NP_001266175.1">
    <property type="nucleotide sequence ID" value="NM_001279246.1"/>
</dbReference>
<dbReference type="SMR" id="Q3MSM4"/>
<dbReference type="STRING" id="9597.ENSPPAP00000025067"/>
<dbReference type="GeneID" id="100973567"/>
<dbReference type="KEGG" id="pps:100973567"/>
<dbReference type="CTD" id="7915"/>
<dbReference type="eggNOG" id="KOG2451">
    <property type="taxonomic scope" value="Eukaryota"/>
</dbReference>
<dbReference type="BRENDA" id="1.2.1.24">
    <property type="organism ID" value="9016"/>
</dbReference>
<dbReference type="UniPathway" id="UPA00733"/>
<dbReference type="Proteomes" id="UP000240080">
    <property type="component" value="Unplaced"/>
</dbReference>
<dbReference type="GO" id="GO:0005739">
    <property type="term" value="C:mitochondrion"/>
    <property type="evidence" value="ECO:0007669"/>
    <property type="project" value="UniProtKB-SubCell"/>
</dbReference>
<dbReference type="GO" id="GO:0042802">
    <property type="term" value="F:identical protein binding"/>
    <property type="evidence" value="ECO:0000250"/>
    <property type="project" value="UniProtKB"/>
</dbReference>
<dbReference type="GO" id="GO:0004777">
    <property type="term" value="F:succinate-semialdehyde dehydrogenase (NAD+) activity"/>
    <property type="evidence" value="ECO:0000250"/>
    <property type="project" value="UniProtKB"/>
</dbReference>
<dbReference type="GO" id="GO:0007417">
    <property type="term" value="P:central nervous system development"/>
    <property type="evidence" value="ECO:0000250"/>
    <property type="project" value="UniProtKB"/>
</dbReference>
<dbReference type="GO" id="GO:0009450">
    <property type="term" value="P:gamma-aminobutyric acid catabolic process"/>
    <property type="evidence" value="ECO:0000250"/>
    <property type="project" value="UniProtKB"/>
</dbReference>
<dbReference type="GO" id="GO:0006105">
    <property type="term" value="P:succinate metabolic process"/>
    <property type="evidence" value="ECO:0000250"/>
    <property type="project" value="UniProtKB"/>
</dbReference>
<dbReference type="CDD" id="cd07103">
    <property type="entry name" value="ALDH_F5_SSADH_GabD"/>
    <property type="match status" value="1"/>
</dbReference>
<dbReference type="FunFam" id="3.40.605.10:FF:000026">
    <property type="entry name" value="Aldehyde dehydrogenase, putative"/>
    <property type="match status" value="1"/>
</dbReference>
<dbReference type="FunFam" id="3.40.309.10:FF:000004">
    <property type="entry name" value="Succinate-semialdehyde dehydrogenase I"/>
    <property type="match status" value="1"/>
</dbReference>
<dbReference type="FunFam" id="3.40.605.10:FF:000096">
    <property type="entry name" value="Succinate-semialdehyde dehydrogenase, mitochondrial"/>
    <property type="match status" value="1"/>
</dbReference>
<dbReference type="Gene3D" id="3.40.605.10">
    <property type="entry name" value="Aldehyde Dehydrogenase, Chain A, domain 1"/>
    <property type="match status" value="1"/>
</dbReference>
<dbReference type="Gene3D" id="3.40.309.10">
    <property type="entry name" value="Aldehyde Dehydrogenase, Chain A, domain 2"/>
    <property type="match status" value="1"/>
</dbReference>
<dbReference type="InterPro" id="IPR016161">
    <property type="entry name" value="Ald_DH/histidinol_DH"/>
</dbReference>
<dbReference type="InterPro" id="IPR016163">
    <property type="entry name" value="Ald_DH_C"/>
</dbReference>
<dbReference type="InterPro" id="IPR016160">
    <property type="entry name" value="Ald_DH_CS_CYS"/>
</dbReference>
<dbReference type="InterPro" id="IPR029510">
    <property type="entry name" value="Ald_DH_CS_GLU"/>
</dbReference>
<dbReference type="InterPro" id="IPR016162">
    <property type="entry name" value="Ald_DH_N"/>
</dbReference>
<dbReference type="InterPro" id="IPR015590">
    <property type="entry name" value="Aldehyde_DH_dom"/>
</dbReference>
<dbReference type="InterPro" id="IPR050740">
    <property type="entry name" value="Aldehyde_DH_Superfamily"/>
</dbReference>
<dbReference type="InterPro" id="IPR010102">
    <property type="entry name" value="Succ_semiAld_DH"/>
</dbReference>
<dbReference type="NCBIfam" id="TIGR01780">
    <property type="entry name" value="SSADH"/>
    <property type="match status" value="1"/>
</dbReference>
<dbReference type="PANTHER" id="PTHR43353">
    <property type="entry name" value="SUCCINATE-SEMIALDEHYDE DEHYDROGENASE, MITOCHONDRIAL"/>
    <property type="match status" value="1"/>
</dbReference>
<dbReference type="PANTHER" id="PTHR43353:SF5">
    <property type="entry name" value="SUCCINATE-SEMIALDEHYDE DEHYDROGENASE, MITOCHONDRIAL"/>
    <property type="match status" value="1"/>
</dbReference>
<dbReference type="Pfam" id="PF00171">
    <property type="entry name" value="Aldedh"/>
    <property type="match status" value="1"/>
</dbReference>
<dbReference type="SUPFAM" id="SSF53720">
    <property type="entry name" value="ALDH-like"/>
    <property type="match status" value="1"/>
</dbReference>
<dbReference type="PROSITE" id="PS00070">
    <property type="entry name" value="ALDEHYDE_DEHYDR_CYS"/>
    <property type="match status" value="1"/>
</dbReference>
<dbReference type="PROSITE" id="PS00687">
    <property type="entry name" value="ALDEHYDE_DEHYDR_GLU"/>
    <property type="match status" value="1"/>
</dbReference>
<evidence type="ECO:0000250" key="1"/>
<evidence type="ECO:0000250" key="2">
    <source>
        <dbReference type="UniProtKB" id="P51649"/>
    </source>
</evidence>
<evidence type="ECO:0000250" key="3">
    <source>
        <dbReference type="UniProtKB" id="Q8BWF0"/>
    </source>
</evidence>
<evidence type="ECO:0000255" key="4"/>
<evidence type="ECO:0000255" key="5">
    <source>
        <dbReference type="PROSITE-ProRule" id="PRU10007"/>
    </source>
</evidence>
<evidence type="ECO:0000255" key="6">
    <source>
        <dbReference type="PROSITE-ProRule" id="PRU10008"/>
    </source>
</evidence>
<evidence type="ECO:0000305" key="7"/>
<reference key="1">
    <citation type="submission" date="2005-03" db="EMBL/GenBank/DDBJ databases">
        <title>Human succinic semialdehyde dehydrogenase variation in higher primates: intra and inter specific data.</title>
        <authorList>
            <person name="Blasi P."/>
            <person name="Palmerio F."/>
            <person name="Aiello A."/>
            <person name="Rocchi M."/>
            <person name="Malaspina P."/>
            <person name="Novelletto A."/>
        </authorList>
    </citation>
    <scope>NUCLEOTIDE SEQUENCE [MRNA]</scope>
</reference>
<keyword id="KW-0007">Acetylation</keyword>
<keyword id="KW-1015">Disulfide bond</keyword>
<keyword id="KW-0496">Mitochondrion</keyword>
<keyword id="KW-0520">NAD</keyword>
<keyword id="KW-0560">Oxidoreductase</keyword>
<keyword id="KW-0597">Phosphoprotein</keyword>
<keyword id="KW-1185">Reference proteome</keyword>
<keyword id="KW-0809">Transit peptide</keyword>
<feature type="transit peptide" description="Mitochondrion" evidence="4">
    <location>
        <begin position="1"/>
        <end position="47"/>
    </location>
</feature>
<feature type="chain" id="PRO_0000042902" description="Succinate-semialdehyde dehydrogenase, mitochondrial">
    <location>
        <begin position="48"/>
        <end position="535"/>
    </location>
</feature>
<feature type="active site" description="Proton acceptor" evidence="5 6">
    <location>
        <position position="306"/>
    </location>
</feature>
<feature type="active site" description="Nucleophile" evidence="5 6">
    <location>
        <position position="340"/>
    </location>
</feature>
<feature type="binding site" evidence="1">
    <location>
        <position position="213"/>
    </location>
    <ligand>
        <name>NAD(+)</name>
        <dbReference type="ChEBI" id="CHEBI:57540"/>
    </ligand>
</feature>
<feature type="binding site" evidence="1">
    <location>
        <position position="213"/>
    </location>
    <ligand>
        <name>substrate</name>
    </ligand>
</feature>
<feature type="binding site" evidence="1">
    <location>
        <begin position="228"/>
        <end position="231"/>
    </location>
    <ligand>
        <name>NAD(+)</name>
        <dbReference type="ChEBI" id="CHEBI:57540"/>
    </ligand>
</feature>
<feature type="binding site" evidence="1">
    <location>
        <begin position="284"/>
        <end position="289"/>
    </location>
    <ligand>
        <name>NAD(+)</name>
        <dbReference type="ChEBI" id="CHEBI:57540"/>
    </ligand>
</feature>
<feature type="binding site" evidence="1">
    <location>
        <position position="334"/>
    </location>
    <ligand>
        <name>substrate</name>
    </ligand>
</feature>
<feature type="binding site" evidence="1">
    <location>
        <position position="498"/>
    </location>
    <ligand>
        <name>substrate</name>
    </ligand>
</feature>
<feature type="site" description="Transition state stabilizer" evidence="1">
    <location>
        <position position="205"/>
    </location>
</feature>
<feature type="modified residue" description="N6-acetyllysine; alternate" evidence="2">
    <location>
        <position position="126"/>
    </location>
</feature>
<feature type="modified residue" description="N6-succinyllysine; alternate" evidence="3">
    <location>
        <position position="126"/>
    </location>
</feature>
<feature type="modified residue" description="N6-succinyllysine" evidence="3">
    <location>
        <position position="135"/>
    </location>
</feature>
<feature type="modified residue" description="N6-succinyllysine" evidence="3">
    <location>
        <position position="184"/>
    </location>
</feature>
<feature type="modified residue" description="N6-acetyllysine; alternate" evidence="3">
    <location>
        <position position="265"/>
    </location>
</feature>
<feature type="modified residue" description="N6-succinyllysine; alternate" evidence="3">
    <location>
        <position position="265"/>
    </location>
</feature>
<feature type="modified residue" description="N6-acetyllysine" evidence="3">
    <location>
        <position position="365"/>
    </location>
</feature>
<feature type="modified residue" description="N6-succinyllysine" evidence="3">
    <location>
        <position position="402"/>
    </location>
</feature>
<feature type="modified residue" description="N6-acetyllysine" evidence="3">
    <location>
        <position position="411"/>
    </location>
</feature>
<feature type="modified residue" description="Phosphoserine" evidence="2">
    <location>
        <position position="499"/>
    </location>
</feature>
<feature type="disulfide bond" description="In inhibited form" evidence="1">
    <location>
        <begin position="340"/>
        <end position="342"/>
    </location>
</feature>
<sequence>MATCIWLRSCGARRLGWTFPGCRLRPRAGGLVPASGPAPGPAQLRCYAGGLAGLSAALLRTDSFVGGRWLPAAATFPVQDPASGAALGMVADCGVREARAAVRAAYEAFCCWREVSAKERSSLLRKWYNLMIQNKDDLARIITAESGKPLKEAHGEILYSAFFLEWFSEEARRVYGDIIYTPAKDRRALVLKQPIGVAAVITPWNFPSAMITRKVGAALAAGCTVVVKPAEDTPFSALALAELASQAGIPSGVYNVIPCSRKNAKEVGEAICTDPLVSKISFTGSTTTGKILLHHAANSVKRVSMELGGLAPFIVFDSANVDQAVAGAMASKFRNTGQTCVCSNQFLVQRGIHDAFVKAFAEAMKKNLRVGNGFEEGTTQGPLINEKAVEKVEKQVNDAVSKGATVVTGGKRHQLGKNFFEPTLLCNVTQDMLCTHEETFGPLAPVIKFDTEEEAIAIANAADVGLAGYFYSQDPAQIWRVAEQLEVGMVGVNEGLISSVECPFGGVKQSGLGREGSKYGIDEYLELKYVCYGGL</sequence>
<gene>
    <name type="primary">ALDH5A1</name>
</gene>
<proteinExistence type="evidence at transcript level"/>
<name>SSDH_PANPA</name>
<comment type="function">
    <text evidence="1">Catalyzes one step in the degradation of the inhibitory neurotransmitter gamma-aminobutyric acid (GABA).</text>
</comment>
<comment type="catalytic activity">
    <reaction>
        <text>succinate semialdehyde + NAD(+) + H2O = succinate + NADH + 2 H(+)</text>
        <dbReference type="Rhea" id="RHEA:13217"/>
        <dbReference type="ChEBI" id="CHEBI:15377"/>
        <dbReference type="ChEBI" id="CHEBI:15378"/>
        <dbReference type="ChEBI" id="CHEBI:30031"/>
        <dbReference type="ChEBI" id="CHEBI:57540"/>
        <dbReference type="ChEBI" id="CHEBI:57706"/>
        <dbReference type="ChEBI" id="CHEBI:57945"/>
        <dbReference type="EC" id="1.2.1.24"/>
    </reaction>
</comment>
<comment type="activity regulation">
    <text evidence="1">Redox-regulated. Inhibited under oxydizing conditions (By similarity).</text>
</comment>
<comment type="pathway">
    <text>Amino-acid degradation; 4-aminobutanoate degradation.</text>
</comment>
<comment type="subunit">
    <text evidence="1">Homotetramer.</text>
</comment>
<comment type="subcellular location">
    <subcellularLocation>
        <location evidence="1">Mitochondrion</location>
    </subcellularLocation>
</comment>
<comment type="similarity">
    <text evidence="7">Belongs to the aldehyde dehydrogenase family.</text>
</comment>
<accession>Q3MSM4</accession>
<protein>
    <recommendedName>
        <fullName>Succinate-semialdehyde dehydrogenase, mitochondrial</fullName>
        <ecNumber>1.2.1.24</ecNumber>
    </recommendedName>
    <alternativeName>
        <fullName>Aldehyde dehydrogenase family 5 member A1</fullName>
    </alternativeName>
    <alternativeName>
        <fullName>NAD(+)-dependent succinic semialdehyde dehydrogenase</fullName>
    </alternativeName>
</protein>